<evidence type="ECO:0000255" key="1"/>
<evidence type="ECO:0000305" key="2"/>
<organism>
    <name type="scientific">Staphylococcus epidermidis (strain ATCC 35984 / DSM 28319 / BCRC 17069 / CCUG 31568 / BM 3577 / RP62A)</name>
    <dbReference type="NCBI Taxonomy" id="176279"/>
    <lineage>
        <taxon>Bacteria</taxon>
        <taxon>Bacillati</taxon>
        <taxon>Bacillota</taxon>
        <taxon>Bacilli</taxon>
        <taxon>Bacillales</taxon>
        <taxon>Staphylococcaceae</taxon>
        <taxon>Staphylococcus</taxon>
    </lineage>
</organism>
<gene>
    <name type="ordered locus">SERP0111</name>
</gene>
<protein>
    <recommendedName>
        <fullName>UPF0324 membrane protein SERP0111</fullName>
    </recommendedName>
</protein>
<proteinExistence type="inferred from homology"/>
<keyword id="KW-1003">Cell membrane</keyword>
<keyword id="KW-0472">Membrane</keyword>
<keyword id="KW-1185">Reference proteome</keyword>
<keyword id="KW-0812">Transmembrane</keyword>
<keyword id="KW-1133">Transmembrane helix</keyword>
<accession>Q5HRT2</accession>
<sequence length="331" mass="35821">MKSITQASFMKGIMFTFTIAIISYILAKFPILHTIGALAIAIIFAMIYRQVIGYPEHIRPGITFASKRLLKFAIILYGLKLNMGDILGKGWKLLLIDIIVIIFSISLTLLLNQIIKGNKDISILLGIGTGVCGAAAIAATAPILKSKEKDIAISVGIIALVGTIFALIYTAIEAIFNIPTITYGAWTGISLHEIAQVVLAAGIGGSEAMTFALLGKLGRVFLLIPLSIVLILYMRYKSHSSQVQQKIDIPYFLIGFIIMACINTFVPIPSLLMNIINVITTLCMLMAMVALGLNIVLKEVISKALKPFIVICITSICLSGVTLLVTSIMFK</sequence>
<feature type="chain" id="PRO_0000157458" description="UPF0324 membrane protein SERP0111">
    <location>
        <begin position="1"/>
        <end position="331"/>
    </location>
</feature>
<feature type="transmembrane region" description="Helical" evidence="1">
    <location>
        <begin position="7"/>
        <end position="26"/>
    </location>
</feature>
<feature type="transmembrane region" description="Helical" evidence="1">
    <location>
        <begin position="31"/>
        <end position="48"/>
    </location>
</feature>
<feature type="transmembrane region" description="Helical" evidence="1">
    <location>
        <begin position="69"/>
        <end position="88"/>
    </location>
</feature>
<feature type="transmembrane region" description="Helical" evidence="1">
    <location>
        <begin position="93"/>
        <end position="115"/>
    </location>
</feature>
<feature type="transmembrane region" description="Helical" evidence="1">
    <location>
        <begin position="122"/>
        <end position="144"/>
    </location>
</feature>
<feature type="transmembrane region" description="Helical" evidence="1">
    <location>
        <begin position="154"/>
        <end position="176"/>
    </location>
</feature>
<feature type="transmembrane region" description="Helical" evidence="1">
    <location>
        <begin position="183"/>
        <end position="205"/>
    </location>
</feature>
<feature type="transmembrane region" description="Helical" evidence="1">
    <location>
        <begin position="249"/>
        <end position="271"/>
    </location>
</feature>
<feature type="transmembrane region" description="Helical" evidence="1">
    <location>
        <begin position="275"/>
        <end position="297"/>
    </location>
</feature>
<feature type="transmembrane region" description="Helical" evidence="1">
    <location>
        <begin position="308"/>
        <end position="330"/>
    </location>
</feature>
<dbReference type="EMBL" id="CP000029">
    <property type="protein sequence ID" value="AAW53545.1"/>
    <property type="molecule type" value="Genomic_DNA"/>
</dbReference>
<dbReference type="RefSeq" id="WP_001829391.1">
    <property type="nucleotide sequence ID" value="NC_002976.3"/>
</dbReference>
<dbReference type="SMR" id="Q5HRT2"/>
<dbReference type="STRING" id="176279.SERP0111"/>
<dbReference type="KEGG" id="ser:SERP0111"/>
<dbReference type="eggNOG" id="COG2855">
    <property type="taxonomic scope" value="Bacteria"/>
</dbReference>
<dbReference type="HOGENOM" id="CLU_033541_0_1_9"/>
<dbReference type="Proteomes" id="UP000000531">
    <property type="component" value="Chromosome"/>
</dbReference>
<dbReference type="GO" id="GO:0005886">
    <property type="term" value="C:plasma membrane"/>
    <property type="evidence" value="ECO:0007669"/>
    <property type="project" value="UniProtKB-SubCell"/>
</dbReference>
<dbReference type="InterPro" id="IPR018383">
    <property type="entry name" value="UPF0324_pro"/>
</dbReference>
<dbReference type="PANTHER" id="PTHR30106">
    <property type="entry name" value="INNER MEMBRANE PROTEIN YEIH-RELATED"/>
    <property type="match status" value="1"/>
</dbReference>
<dbReference type="PANTHER" id="PTHR30106:SF2">
    <property type="entry name" value="UPF0324 INNER MEMBRANE PROTEIN YEIH"/>
    <property type="match status" value="1"/>
</dbReference>
<dbReference type="Pfam" id="PF03601">
    <property type="entry name" value="Cons_hypoth698"/>
    <property type="match status" value="1"/>
</dbReference>
<reference key="1">
    <citation type="journal article" date="2005" name="J. Bacteriol.">
        <title>Insights on evolution of virulence and resistance from the complete genome analysis of an early methicillin-resistant Staphylococcus aureus strain and a biofilm-producing methicillin-resistant Staphylococcus epidermidis strain.</title>
        <authorList>
            <person name="Gill S.R."/>
            <person name="Fouts D.E."/>
            <person name="Archer G.L."/>
            <person name="Mongodin E.F."/>
            <person name="DeBoy R.T."/>
            <person name="Ravel J."/>
            <person name="Paulsen I.T."/>
            <person name="Kolonay J.F."/>
            <person name="Brinkac L.M."/>
            <person name="Beanan M.J."/>
            <person name="Dodson R.J."/>
            <person name="Daugherty S.C."/>
            <person name="Madupu R."/>
            <person name="Angiuoli S.V."/>
            <person name="Durkin A.S."/>
            <person name="Haft D.H."/>
            <person name="Vamathevan J.J."/>
            <person name="Khouri H."/>
            <person name="Utterback T.R."/>
            <person name="Lee C."/>
            <person name="Dimitrov G."/>
            <person name="Jiang L."/>
            <person name="Qin H."/>
            <person name="Weidman J."/>
            <person name="Tran K."/>
            <person name="Kang K.H."/>
            <person name="Hance I.R."/>
            <person name="Nelson K.E."/>
            <person name="Fraser C.M."/>
        </authorList>
    </citation>
    <scope>NUCLEOTIDE SEQUENCE [LARGE SCALE GENOMIC DNA]</scope>
    <source>
        <strain>ATCC 35984 / DSM 28319 / BCRC 17069 / CCUG 31568 / BM 3577 / RP62A</strain>
    </source>
</reference>
<comment type="subcellular location">
    <subcellularLocation>
        <location evidence="2">Cell membrane</location>
        <topology evidence="2">Multi-pass membrane protein</topology>
    </subcellularLocation>
</comment>
<comment type="similarity">
    <text evidence="2">Belongs to the UPF0324 family.</text>
</comment>
<name>Y111_STAEQ</name>